<gene>
    <name evidence="1" type="primary">cmk</name>
    <name type="ordered locus">CD630_18160</name>
</gene>
<evidence type="ECO:0000255" key="1">
    <source>
        <dbReference type="HAMAP-Rule" id="MF_00238"/>
    </source>
</evidence>
<accession>Q187C4</accession>
<feature type="chain" id="PRO_1000119012" description="Cytidylate kinase">
    <location>
        <begin position="1"/>
        <end position="216"/>
    </location>
</feature>
<feature type="binding site" evidence="1">
    <location>
        <begin position="10"/>
        <end position="18"/>
    </location>
    <ligand>
        <name>ATP</name>
        <dbReference type="ChEBI" id="CHEBI:30616"/>
    </ligand>
</feature>
<dbReference type="EC" id="2.7.4.25" evidence="1"/>
<dbReference type="EMBL" id="AM180355">
    <property type="protein sequence ID" value="CAJ68686.1"/>
    <property type="molecule type" value="Genomic_DNA"/>
</dbReference>
<dbReference type="RefSeq" id="WP_003439454.1">
    <property type="nucleotide sequence ID" value="NZ_JAUPES010000026.1"/>
</dbReference>
<dbReference type="RefSeq" id="YP_001088321.1">
    <property type="nucleotide sequence ID" value="NC_009089.1"/>
</dbReference>
<dbReference type="SMR" id="Q187C4"/>
<dbReference type="STRING" id="272563.CD630_18160"/>
<dbReference type="EnsemblBacteria" id="CAJ68686">
    <property type="protein sequence ID" value="CAJ68686"/>
    <property type="gene ID" value="CD630_18160"/>
</dbReference>
<dbReference type="GeneID" id="66354234"/>
<dbReference type="KEGG" id="cdf:CD630_18160"/>
<dbReference type="KEGG" id="pdc:CDIF630_02016"/>
<dbReference type="PATRIC" id="fig|272563.120.peg.1910"/>
<dbReference type="eggNOG" id="COG0283">
    <property type="taxonomic scope" value="Bacteria"/>
</dbReference>
<dbReference type="OrthoDB" id="9807434at2"/>
<dbReference type="PhylomeDB" id="Q187C4"/>
<dbReference type="BioCyc" id="PDIF272563:G12WB-1960-MONOMER"/>
<dbReference type="Proteomes" id="UP000001978">
    <property type="component" value="Chromosome"/>
</dbReference>
<dbReference type="GO" id="GO:0005829">
    <property type="term" value="C:cytosol"/>
    <property type="evidence" value="ECO:0007669"/>
    <property type="project" value="TreeGrafter"/>
</dbReference>
<dbReference type="GO" id="GO:0005524">
    <property type="term" value="F:ATP binding"/>
    <property type="evidence" value="ECO:0007669"/>
    <property type="project" value="UniProtKB-UniRule"/>
</dbReference>
<dbReference type="GO" id="GO:0036430">
    <property type="term" value="F:CMP kinase activity"/>
    <property type="evidence" value="ECO:0007669"/>
    <property type="project" value="RHEA"/>
</dbReference>
<dbReference type="GO" id="GO:0036431">
    <property type="term" value="F:dCMP kinase activity"/>
    <property type="evidence" value="ECO:0007669"/>
    <property type="project" value="RHEA"/>
</dbReference>
<dbReference type="GO" id="GO:0015949">
    <property type="term" value="P:nucleobase-containing small molecule interconversion"/>
    <property type="evidence" value="ECO:0007669"/>
    <property type="project" value="TreeGrafter"/>
</dbReference>
<dbReference type="GO" id="GO:0006220">
    <property type="term" value="P:pyrimidine nucleotide metabolic process"/>
    <property type="evidence" value="ECO:0007669"/>
    <property type="project" value="UniProtKB-UniRule"/>
</dbReference>
<dbReference type="CDD" id="cd02020">
    <property type="entry name" value="CMPK"/>
    <property type="match status" value="1"/>
</dbReference>
<dbReference type="Gene3D" id="3.40.50.300">
    <property type="entry name" value="P-loop containing nucleotide triphosphate hydrolases"/>
    <property type="match status" value="1"/>
</dbReference>
<dbReference type="HAMAP" id="MF_00238">
    <property type="entry name" value="Cytidyl_kinase_type1"/>
    <property type="match status" value="1"/>
</dbReference>
<dbReference type="InterPro" id="IPR003136">
    <property type="entry name" value="Cytidylate_kin"/>
</dbReference>
<dbReference type="InterPro" id="IPR011994">
    <property type="entry name" value="Cytidylate_kinase_dom"/>
</dbReference>
<dbReference type="InterPro" id="IPR027417">
    <property type="entry name" value="P-loop_NTPase"/>
</dbReference>
<dbReference type="NCBIfam" id="TIGR00017">
    <property type="entry name" value="cmk"/>
    <property type="match status" value="1"/>
</dbReference>
<dbReference type="PANTHER" id="PTHR21299:SF2">
    <property type="entry name" value="CYTIDYLATE KINASE"/>
    <property type="match status" value="1"/>
</dbReference>
<dbReference type="PANTHER" id="PTHR21299">
    <property type="entry name" value="CYTIDYLATE KINASE/PANTOATE-BETA-ALANINE LIGASE"/>
    <property type="match status" value="1"/>
</dbReference>
<dbReference type="Pfam" id="PF02224">
    <property type="entry name" value="Cytidylate_kin"/>
    <property type="match status" value="1"/>
</dbReference>
<dbReference type="SUPFAM" id="SSF52540">
    <property type="entry name" value="P-loop containing nucleoside triphosphate hydrolases"/>
    <property type="match status" value="1"/>
</dbReference>
<keyword id="KW-0067">ATP-binding</keyword>
<keyword id="KW-0963">Cytoplasm</keyword>
<keyword id="KW-0418">Kinase</keyword>
<keyword id="KW-0547">Nucleotide-binding</keyword>
<keyword id="KW-1185">Reference proteome</keyword>
<keyword id="KW-0808">Transferase</keyword>
<protein>
    <recommendedName>
        <fullName evidence="1">Cytidylate kinase</fullName>
        <shortName evidence="1">CK</shortName>
        <ecNumber evidence="1">2.7.4.25</ecNumber>
    </recommendedName>
    <alternativeName>
        <fullName evidence="1">Cytidine monophosphate kinase</fullName>
        <shortName evidence="1">CMP kinase</shortName>
    </alternativeName>
</protein>
<sequence>MGNLVIAVDGPAGAGKSTIAKIVAKKLNINYIDTGAMYRAVTYKCLKSGIDVNNEKEVIQIAENSDIDFKDNNIYLDKEVINEEIRTIEVSNNVSNVAKIKEVRQLMVEVQRKIGMKNSVILDGRDIGSYVFPDADYKFFLVATPEERGNRRYKELCNKGYNTTLEEVIEDIIRRDEIDSNREFAPLVKANDALEIDTTGKTIEEVVEEVVSKINL</sequence>
<proteinExistence type="inferred from homology"/>
<name>KCY_CLOD6</name>
<organism>
    <name type="scientific">Clostridioides difficile (strain 630)</name>
    <name type="common">Peptoclostridium difficile</name>
    <dbReference type="NCBI Taxonomy" id="272563"/>
    <lineage>
        <taxon>Bacteria</taxon>
        <taxon>Bacillati</taxon>
        <taxon>Bacillota</taxon>
        <taxon>Clostridia</taxon>
        <taxon>Peptostreptococcales</taxon>
        <taxon>Peptostreptococcaceae</taxon>
        <taxon>Clostridioides</taxon>
    </lineage>
</organism>
<comment type="catalytic activity">
    <reaction evidence="1">
        <text>CMP + ATP = CDP + ADP</text>
        <dbReference type="Rhea" id="RHEA:11600"/>
        <dbReference type="ChEBI" id="CHEBI:30616"/>
        <dbReference type="ChEBI" id="CHEBI:58069"/>
        <dbReference type="ChEBI" id="CHEBI:60377"/>
        <dbReference type="ChEBI" id="CHEBI:456216"/>
        <dbReference type="EC" id="2.7.4.25"/>
    </reaction>
</comment>
<comment type="catalytic activity">
    <reaction evidence="1">
        <text>dCMP + ATP = dCDP + ADP</text>
        <dbReference type="Rhea" id="RHEA:25094"/>
        <dbReference type="ChEBI" id="CHEBI:30616"/>
        <dbReference type="ChEBI" id="CHEBI:57566"/>
        <dbReference type="ChEBI" id="CHEBI:58593"/>
        <dbReference type="ChEBI" id="CHEBI:456216"/>
        <dbReference type="EC" id="2.7.4.25"/>
    </reaction>
</comment>
<comment type="subcellular location">
    <subcellularLocation>
        <location evidence="1">Cytoplasm</location>
    </subcellularLocation>
</comment>
<comment type="similarity">
    <text evidence="1">Belongs to the cytidylate kinase family. Type 1 subfamily.</text>
</comment>
<reference key="1">
    <citation type="journal article" date="2006" name="Nat. Genet.">
        <title>The multidrug-resistant human pathogen Clostridium difficile has a highly mobile, mosaic genome.</title>
        <authorList>
            <person name="Sebaihia M."/>
            <person name="Wren B.W."/>
            <person name="Mullany P."/>
            <person name="Fairweather N.F."/>
            <person name="Minton N."/>
            <person name="Stabler R."/>
            <person name="Thomson N.R."/>
            <person name="Roberts A.P."/>
            <person name="Cerdeno-Tarraga A.M."/>
            <person name="Wang H."/>
            <person name="Holden M.T.G."/>
            <person name="Wright A."/>
            <person name="Churcher C."/>
            <person name="Quail M.A."/>
            <person name="Baker S."/>
            <person name="Bason N."/>
            <person name="Brooks K."/>
            <person name="Chillingworth T."/>
            <person name="Cronin A."/>
            <person name="Davis P."/>
            <person name="Dowd L."/>
            <person name="Fraser A."/>
            <person name="Feltwell T."/>
            <person name="Hance Z."/>
            <person name="Holroyd S."/>
            <person name="Jagels K."/>
            <person name="Moule S."/>
            <person name="Mungall K."/>
            <person name="Price C."/>
            <person name="Rabbinowitsch E."/>
            <person name="Sharp S."/>
            <person name="Simmonds M."/>
            <person name="Stevens K."/>
            <person name="Unwin L."/>
            <person name="Whithead S."/>
            <person name="Dupuy B."/>
            <person name="Dougan G."/>
            <person name="Barrell B."/>
            <person name="Parkhill J."/>
        </authorList>
    </citation>
    <scope>NUCLEOTIDE SEQUENCE [LARGE SCALE GENOMIC DNA]</scope>
    <source>
        <strain>630</strain>
    </source>
</reference>